<proteinExistence type="inferred from homology"/>
<reference key="1">
    <citation type="submission" date="2006-09" db="EMBL/GenBank/DDBJ databases">
        <authorList>
            <consortium name="The Klebsiella pneumonia Genome Sequencing Project"/>
            <person name="McClelland M."/>
            <person name="Sanderson E.K."/>
            <person name="Spieth J."/>
            <person name="Clifton W.S."/>
            <person name="Latreille P."/>
            <person name="Sabo A."/>
            <person name="Pepin K."/>
            <person name="Bhonagiri V."/>
            <person name="Porwollik S."/>
            <person name="Ali J."/>
            <person name="Wilson R.K."/>
        </authorList>
    </citation>
    <scope>NUCLEOTIDE SEQUENCE [LARGE SCALE GENOMIC DNA]</scope>
    <source>
        <strain>ATCC 700721 / MGH 78578</strain>
    </source>
</reference>
<organism>
    <name type="scientific">Klebsiella pneumoniae subsp. pneumoniae (strain ATCC 700721 / MGH 78578)</name>
    <dbReference type="NCBI Taxonomy" id="272620"/>
    <lineage>
        <taxon>Bacteria</taxon>
        <taxon>Pseudomonadati</taxon>
        <taxon>Pseudomonadota</taxon>
        <taxon>Gammaproteobacteria</taxon>
        <taxon>Enterobacterales</taxon>
        <taxon>Enterobacteriaceae</taxon>
        <taxon>Klebsiella/Raoultella group</taxon>
        <taxon>Klebsiella</taxon>
        <taxon>Klebsiella pneumoniae complex</taxon>
    </lineage>
</organism>
<gene>
    <name evidence="1" type="primary">nhaA1</name>
    <name type="ordered locus">KPN78578_00160</name>
    <name type="ORF">KPN_00016</name>
</gene>
<dbReference type="EMBL" id="CP000647">
    <property type="protein sequence ID" value="ABR75477.1"/>
    <property type="molecule type" value="Genomic_DNA"/>
</dbReference>
<dbReference type="SMR" id="A6T4F6"/>
<dbReference type="STRING" id="272620.KPN_00016"/>
<dbReference type="PaxDb" id="272620-KPN_00016"/>
<dbReference type="EnsemblBacteria" id="ABR75477">
    <property type="protein sequence ID" value="ABR75477"/>
    <property type="gene ID" value="KPN_00016"/>
</dbReference>
<dbReference type="KEGG" id="kpn:KPN_00016"/>
<dbReference type="HOGENOM" id="CLU_015803_1_0_6"/>
<dbReference type="Proteomes" id="UP000000265">
    <property type="component" value="Chromosome"/>
</dbReference>
<dbReference type="GO" id="GO:0005886">
    <property type="term" value="C:plasma membrane"/>
    <property type="evidence" value="ECO:0007669"/>
    <property type="project" value="UniProtKB-SubCell"/>
</dbReference>
<dbReference type="GO" id="GO:0015385">
    <property type="term" value="F:sodium:proton antiporter activity"/>
    <property type="evidence" value="ECO:0007669"/>
    <property type="project" value="TreeGrafter"/>
</dbReference>
<dbReference type="GO" id="GO:0006885">
    <property type="term" value="P:regulation of pH"/>
    <property type="evidence" value="ECO:0007669"/>
    <property type="project" value="InterPro"/>
</dbReference>
<dbReference type="FunFam" id="1.20.1530.10:FF:000001">
    <property type="entry name" value="Na(+)/H(+) antiporter NhaA"/>
    <property type="match status" value="1"/>
</dbReference>
<dbReference type="Gene3D" id="1.20.1530.10">
    <property type="entry name" value="Na+/H+ antiporter like domain"/>
    <property type="match status" value="1"/>
</dbReference>
<dbReference type="HAMAP" id="MF_01844">
    <property type="entry name" value="NhaA"/>
    <property type="match status" value="1"/>
</dbReference>
<dbReference type="InterPro" id="IPR023171">
    <property type="entry name" value="Na/H_antiporter_dom_sf"/>
</dbReference>
<dbReference type="InterPro" id="IPR004670">
    <property type="entry name" value="NhaA"/>
</dbReference>
<dbReference type="NCBIfam" id="TIGR00773">
    <property type="entry name" value="NhaA"/>
    <property type="match status" value="1"/>
</dbReference>
<dbReference type="NCBIfam" id="NF007111">
    <property type="entry name" value="PRK09560.1"/>
    <property type="match status" value="1"/>
</dbReference>
<dbReference type="NCBIfam" id="NF007112">
    <property type="entry name" value="PRK09561.1"/>
    <property type="match status" value="1"/>
</dbReference>
<dbReference type="PANTHER" id="PTHR30341:SF0">
    <property type="entry name" value="NA(+)_H(+) ANTIPORTER NHAA"/>
    <property type="match status" value="1"/>
</dbReference>
<dbReference type="PANTHER" id="PTHR30341">
    <property type="entry name" value="SODIUM ION/PROTON ANTIPORTER NHAA-RELATED"/>
    <property type="match status" value="1"/>
</dbReference>
<dbReference type="Pfam" id="PF06965">
    <property type="entry name" value="Na_H_antiport_1"/>
    <property type="match status" value="1"/>
</dbReference>
<name>NHAA1_KLEP7</name>
<keyword id="KW-0050">Antiport</keyword>
<keyword id="KW-0997">Cell inner membrane</keyword>
<keyword id="KW-1003">Cell membrane</keyword>
<keyword id="KW-0406">Ion transport</keyword>
<keyword id="KW-0472">Membrane</keyword>
<keyword id="KW-0915">Sodium</keyword>
<keyword id="KW-0739">Sodium transport</keyword>
<keyword id="KW-0812">Transmembrane</keyword>
<keyword id="KW-1133">Transmembrane helix</keyword>
<keyword id="KW-0813">Transport</keyword>
<feature type="chain" id="PRO_0000334327" description="Na(+)/H(+) antiporter NhaA 1">
    <location>
        <begin position="1"/>
        <end position="395"/>
    </location>
</feature>
<feature type="transmembrane region" description="Helical" evidence="1">
    <location>
        <begin position="11"/>
        <end position="31"/>
    </location>
</feature>
<feature type="transmembrane region" description="Helical" evidence="1">
    <location>
        <begin position="63"/>
        <end position="83"/>
    </location>
</feature>
<feature type="transmembrane region" description="Helical" evidence="1">
    <location>
        <begin position="99"/>
        <end position="119"/>
    </location>
</feature>
<feature type="transmembrane region" description="Helical" evidence="1">
    <location>
        <begin position="129"/>
        <end position="149"/>
    </location>
</feature>
<feature type="transmembrane region" description="Helical" evidence="1">
    <location>
        <begin position="158"/>
        <end position="178"/>
    </location>
</feature>
<feature type="transmembrane region" description="Helical" evidence="1">
    <location>
        <begin position="183"/>
        <end position="203"/>
    </location>
</feature>
<feature type="transmembrane region" description="Helical" evidence="1">
    <location>
        <begin position="223"/>
        <end position="243"/>
    </location>
</feature>
<feature type="transmembrane region" description="Helical" evidence="1">
    <location>
        <begin position="258"/>
        <end position="278"/>
    </location>
</feature>
<feature type="transmembrane region" description="Helical" evidence="1">
    <location>
        <begin position="282"/>
        <end position="302"/>
    </location>
</feature>
<feature type="transmembrane region" description="Helical" evidence="1">
    <location>
        <begin position="332"/>
        <end position="352"/>
    </location>
</feature>
<feature type="transmembrane region" description="Helical" evidence="1">
    <location>
        <begin position="364"/>
        <end position="384"/>
    </location>
</feature>
<comment type="function">
    <text evidence="1">Na(+)/H(+) antiporter that extrudes sodium in exchange for external protons.</text>
</comment>
<comment type="catalytic activity">
    <reaction evidence="1">
        <text>Na(+)(in) + 2 H(+)(out) = Na(+)(out) + 2 H(+)(in)</text>
        <dbReference type="Rhea" id="RHEA:29251"/>
        <dbReference type="ChEBI" id="CHEBI:15378"/>
        <dbReference type="ChEBI" id="CHEBI:29101"/>
    </reaction>
    <physiologicalReaction direction="left-to-right" evidence="1">
        <dbReference type="Rhea" id="RHEA:29252"/>
    </physiologicalReaction>
</comment>
<comment type="subcellular location">
    <subcellularLocation>
        <location evidence="1">Cell inner membrane</location>
        <topology evidence="1">Multi-pass membrane protein</topology>
    </subcellularLocation>
</comment>
<comment type="similarity">
    <text evidence="1">Belongs to the NhaA Na(+)/H(+) (TC 2.A.33) antiporter family.</text>
</comment>
<protein>
    <recommendedName>
        <fullName evidence="1">Na(+)/H(+) antiporter NhaA 1</fullName>
    </recommendedName>
    <alternativeName>
        <fullName evidence="1">Sodium/proton antiporter NhaA 1</fullName>
    </alternativeName>
</protein>
<sequence length="395" mass="41743">MKVKVKHLQRFFSSDASGGIVLIIAAALAMVMANTSVTSGLYHSFLETPVQLRVGALEINKNMLLWINDALMAVFFLLIGLEVKRELIQGSLASRRQAVFPVIAALGGMIVPALVYLAFNAQDPVAREGWAIPAATDIAFALGVLALLGSRVPTALKIFLMALAIIDDLGAIVIIALFYTHDLSMLSLGVAAAAIAVLMALNLSGVRRTGIYILVGAVLWTAVLKSGVHATLAGVIVGFMIPLEEKHGKSPAKALEHVLHPWVAFMILPLFAFANAGVSLQGVTLAGLTSLLPLGIMAGLFIGKPLGISLFCWLALKLKWASLPEGTTCKQIMAVGILCGIGFTMSIFIATLAFGSVDPALINWAKLGILIGSVLSAVVGYLILRQRVTDTRLAV</sequence>
<evidence type="ECO:0000255" key="1">
    <source>
        <dbReference type="HAMAP-Rule" id="MF_01844"/>
    </source>
</evidence>
<accession>A6T4F6</accession>